<dbReference type="EMBL" id="CP000746">
    <property type="protein sequence ID" value="ABR73728.1"/>
    <property type="molecule type" value="Genomic_DNA"/>
</dbReference>
<dbReference type="RefSeq" id="WP_011979003.1">
    <property type="nucleotide sequence ID" value="NC_009655.1"/>
</dbReference>
<dbReference type="SMR" id="A6VL81"/>
<dbReference type="STRING" id="339671.Asuc_0350"/>
<dbReference type="KEGG" id="asu:Asuc_0350"/>
<dbReference type="eggNOG" id="COG1220">
    <property type="taxonomic scope" value="Bacteria"/>
</dbReference>
<dbReference type="HOGENOM" id="CLU_033123_0_0_6"/>
<dbReference type="OrthoDB" id="9804062at2"/>
<dbReference type="Proteomes" id="UP000001114">
    <property type="component" value="Chromosome"/>
</dbReference>
<dbReference type="GO" id="GO:0009376">
    <property type="term" value="C:HslUV protease complex"/>
    <property type="evidence" value="ECO:0007669"/>
    <property type="project" value="UniProtKB-UniRule"/>
</dbReference>
<dbReference type="GO" id="GO:0005524">
    <property type="term" value="F:ATP binding"/>
    <property type="evidence" value="ECO:0007669"/>
    <property type="project" value="UniProtKB-UniRule"/>
</dbReference>
<dbReference type="GO" id="GO:0016887">
    <property type="term" value="F:ATP hydrolysis activity"/>
    <property type="evidence" value="ECO:0007669"/>
    <property type="project" value="InterPro"/>
</dbReference>
<dbReference type="GO" id="GO:0008233">
    <property type="term" value="F:peptidase activity"/>
    <property type="evidence" value="ECO:0007669"/>
    <property type="project" value="InterPro"/>
</dbReference>
<dbReference type="GO" id="GO:0036402">
    <property type="term" value="F:proteasome-activating activity"/>
    <property type="evidence" value="ECO:0007669"/>
    <property type="project" value="UniProtKB-UniRule"/>
</dbReference>
<dbReference type="GO" id="GO:0043335">
    <property type="term" value="P:protein unfolding"/>
    <property type="evidence" value="ECO:0007669"/>
    <property type="project" value="UniProtKB-UniRule"/>
</dbReference>
<dbReference type="GO" id="GO:0051603">
    <property type="term" value="P:proteolysis involved in protein catabolic process"/>
    <property type="evidence" value="ECO:0007669"/>
    <property type="project" value="TreeGrafter"/>
</dbReference>
<dbReference type="CDD" id="cd19498">
    <property type="entry name" value="RecA-like_HslU"/>
    <property type="match status" value="1"/>
</dbReference>
<dbReference type="FunFam" id="1.10.8.10:FF:000028">
    <property type="entry name" value="ATP-dependent protease ATPase subunit HslU"/>
    <property type="match status" value="1"/>
</dbReference>
<dbReference type="FunFam" id="1.10.8.60:FF:000027">
    <property type="entry name" value="ATP-dependent protease ATPase subunit HslU"/>
    <property type="match status" value="1"/>
</dbReference>
<dbReference type="FunFam" id="3.40.50.300:FF:000213">
    <property type="entry name" value="ATP-dependent protease ATPase subunit HslU"/>
    <property type="match status" value="1"/>
</dbReference>
<dbReference type="FunFam" id="3.40.50.300:FF:000220">
    <property type="entry name" value="ATP-dependent protease ATPase subunit HslU"/>
    <property type="match status" value="1"/>
</dbReference>
<dbReference type="Gene3D" id="1.10.8.60">
    <property type="match status" value="1"/>
</dbReference>
<dbReference type="Gene3D" id="1.10.8.10">
    <property type="entry name" value="DNA helicase RuvA subunit, C-terminal domain"/>
    <property type="match status" value="2"/>
</dbReference>
<dbReference type="Gene3D" id="3.40.50.300">
    <property type="entry name" value="P-loop containing nucleotide triphosphate hydrolases"/>
    <property type="match status" value="1"/>
</dbReference>
<dbReference type="HAMAP" id="MF_00249">
    <property type="entry name" value="HslU"/>
    <property type="match status" value="1"/>
</dbReference>
<dbReference type="InterPro" id="IPR003593">
    <property type="entry name" value="AAA+_ATPase"/>
</dbReference>
<dbReference type="InterPro" id="IPR050052">
    <property type="entry name" value="ATP-dep_Clp_protease_ClpX"/>
</dbReference>
<dbReference type="InterPro" id="IPR003959">
    <property type="entry name" value="ATPase_AAA_core"/>
</dbReference>
<dbReference type="InterPro" id="IPR019489">
    <property type="entry name" value="Clp_ATPase_C"/>
</dbReference>
<dbReference type="InterPro" id="IPR004491">
    <property type="entry name" value="HslU"/>
</dbReference>
<dbReference type="InterPro" id="IPR027417">
    <property type="entry name" value="P-loop_NTPase"/>
</dbReference>
<dbReference type="NCBIfam" id="TIGR00390">
    <property type="entry name" value="hslU"/>
    <property type="match status" value="1"/>
</dbReference>
<dbReference type="NCBIfam" id="NF003544">
    <property type="entry name" value="PRK05201.1"/>
    <property type="match status" value="1"/>
</dbReference>
<dbReference type="PANTHER" id="PTHR48102">
    <property type="entry name" value="ATP-DEPENDENT CLP PROTEASE ATP-BINDING SUBUNIT CLPX-LIKE, MITOCHONDRIAL-RELATED"/>
    <property type="match status" value="1"/>
</dbReference>
<dbReference type="PANTHER" id="PTHR48102:SF3">
    <property type="entry name" value="ATP-DEPENDENT PROTEASE ATPASE SUBUNIT HSLU"/>
    <property type="match status" value="1"/>
</dbReference>
<dbReference type="Pfam" id="PF00004">
    <property type="entry name" value="AAA"/>
    <property type="match status" value="1"/>
</dbReference>
<dbReference type="Pfam" id="PF07724">
    <property type="entry name" value="AAA_2"/>
    <property type="match status" value="1"/>
</dbReference>
<dbReference type="SMART" id="SM00382">
    <property type="entry name" value="AAA"/>
    <property type="match status" value="1"/>
</dbReference>
<dbReference type="SMART" id="SM01086">
    <property type="entry name" value="ClpB_D2-small"/>
    <property type="match status" value="1"/>
</dbReference>
<dbReference type="SUPFAM" id="SSF52540">
    <property type="entry name" value="P-loop containing nucleoside triphosphate hydrolases"/>
    <property type="match status" value="1"/>
</dbReference>
<feature type="chain" id="PRO_1000071849" description="ATP-dependent protease ATPase subunit HslU">
    <location>
        <begin position="1"/>
        <end position="441"/>
    </location>
</feature>
<feature type="binding site" evidence="1">
    <location>
        <position position="18"/>
    </location>
    <ligand>
        <name>ATP</name>
        <dbReference type="ChEBI" id="CHEBI:30616"/>
    </ligand>
</feature>
<feature type="binding site" evidence="1">
    <location>
        <begin position="60"/>
        <end position="65"/>
    </location>
    <ligand>
        <name>ATP</name>
        <dbReference type="ChEBI" id="CHEBI:30616"/>
    </ligand>
</feature>
<feature type="binding site" evidence="1">
    <location>
        <position position="254"/>
    </location>
    <ligand>
        <name>ATP</name>
        <dbReference type="ChEBI" id="CHEBI:30616"/>
    </ligand>
</feature>
<feature type="binding site" evidence="1">
    <location>
        <position position="319"/>
    </location>
    <ligand>
        <name>ATP</name>
        <dbReference type="ChEBI" id="CHEBI:30616"/>
    </ligand>
</feature>
<feature type="binding site" evidence="1">
    <location>
        <position position="391"/>
    </location>
    <ligand>
        <name>ATP</name>
        <dbReference type="ChEBI" id="CHEBI:30616"/>
    </ligand>
</feature>
<name>HSLU_ACTSZ</name>
<protein>
    <recommendedName>
        <fullName evidence="1">ATP-dependent protease ATPase subunit HslU</fullName>
    </recommendedName>
    <alternativeName>
        <fullName evidence="1">Unfoldase HslU</fullName>
    </alternativeName>
</protein>
<accession>A6VL81</accession>
<comment type="function">
    <text evidence="1">ATPase subunit of a proteasome-like degradation complex; this subunit has chaperone activity. The binding of ATP and its subsequent hydrolysis by HslU are essential for unfolding of protein substrates subsequently hydrolyzed by HslV. HslU recognizes the N-terminal part of its protein substrates and unfolds these before they are guided to HslV for hydrolysis.</text>
</comment>
<comment type="subunit">
    <text evidence="1">A double ring-shaped homohexamer of HslV is capped on each side by a ring-shaped HslU homohexamer. The assembly of the HslU/HslV complex is dependent on binding of ATP.</text>
</comment>
<comment type="subcellular location">
    <subcellularLocation>
        <location evidence="1">Cytoplasm</location>
    </subcellularLocation>
</comment>
<comment type="similarity">
    <text evidence="1">Belongs to the ClpX chaperone family. HslU subfamily.</text>
</comment>
<keyword id="KW-0067">ATP-binding</keyword>
<keyword id="KW-0143">Chaperone</keyword>
<keyword id="KW-0963">Cytoplasm</keyword>
<keyword id="KW-0547">Nucleotide-binding</keyword>
<keyword id="KW-1185">Reference proteome</keyword>
<keyword id="KW-0346">Stress response</keyword>
<evidence type="ECO:0000255" key="1">
    <source>
        <dbReference type="HAMAP-Rule" id="MF_00249"/>
    </source>
</evidence>
<gene>
    <name evidence="1" type="primary">hslU</name>
    <name type="ordered locus">Asuc_0350</name>
</gene>
<sequence length="441" mass="49726">MSTMTPREIVSELDAYIIGQSEAKRAVAIALRNRWRRMQLPEELRQEVTPKNILMIGPTGVGKTEIARRLAKLANAPFVKVEATKFTEVGYVGKEVDTIIRDLTDMAVKQIRKIEVEKNRMKAQDAAEERILDILLPRAKNKWGETEYEKDSATRQVFRKKLREGALDDSEIEVDISSQMNVEIMTPPGMEEMTSQLQSLFEGLSPSHSKKRRMKVKDAMKVLIDDEAAKLVNNEDLKQKAIESVEQNGIVFIDEIDKICKQSDRGGADVSREGVQRDLLPIIEGSTVNTKHGMVKTDHILFICSGAFQVARPSDLLPELQGRLPIRVELKSLTKEDFERILTEPSASLTLQYKELMKTEGVTVEFTPDGISKIAEAAFHVNEKTENIGARRLHTVLERLMDGISFDASERSGESVVIDEKYVSEVLNDVVDNEDLSRFIL</sequence>
<reference key="1">
    <citation type="journal article" date="2010" name="BMC Genomics">
        <title>A genomic perspective on the potential of Actinobacillus succinogenes for industrial succinate production.</title>
        <authorList>
            <person name="McKinlay J.B."/>
            <person name="Laivenieks M."/>
            <person name="Schindler B.D."/>
            <person name="McKinlay A.A."/>
            <person name="Siddaramappa S."/>
            <person name="Challacombe J.F."/>
            <person name="Lowry S.R."/>
            <person name="Clum A."/>
            <person name="Lapidus A.L."/>
            <person name="Burkhart K.B."/>
            <person name="Harkins V."/>
            <person name="Vieille C."/>
        </authorList>
    </citation>
    <scope>NUCLEOTIDE SEQUENCE [LARGE SCALE GENOMIC DNA]</scope>
    <source>
        <strain>ATCC 55618 / DSM 22257 / CCUG 43843 / 130Z</strain>
    </source>
</reference>
<proteinExistence type="inferred from homology"/>
<organism>
    <name type="scientific">Actinobacillus succinogenes (strain ATCC 55618 / DSM 22257 / CCUG 43843 / 130Z)</name>
    <dbReference type="NCBI Taxonomy" id="339671"/>
    <lineage>
        <taxon>Bacteria</taxon>
        <taxon>Pseudomonadati</taxon>
        <taxon>Pseudomonadota</taxon>
        <taxon>Gammaproteobacteria</taxon>
        <taxon>Pasteurellales</taxon>
        <taxon>Pasteurellaceae</taxon>
        <taxon>Actinobacillus</taxon>
    </lineage>
</organism>